<organism>
    <name type="scientific">Shewanella amazonensis (strain ATCC BAA-1098 / SB2B)</name>
    <dbReference type="NCBI Taxonomy" id="326297"/>
    <lineage>
        <taxon>Bacteria</taxon>
        <taxon>Pseudomonadati</taxon>
        <taxon>Pseudomonadota</taxon>
        <taxon>Gammaproteobacteria</taxon>
        <taxon>Alteromonadales</taxon>
        <taxon>Shewanellaceae</taxon>
        <taxon>Shewanella</taxon>
    </lineage>
</organism>
<proteinExistence type="inferred from homology"/>
<evidence type="ECO:0000255" key="1">
    <source>
        <dbReference type="HAMAP-Rule" id="MF_00179"/>
    </source>
</evidence>
<sequence>MSIKYVATSKLPTPWGVFAMHGFEDSETGKEHVALTFGDLSGDAPVLGRIHSECLTGDALFSLRCDCGFQLQTAMQRIAETGRGFILYLRQEGRGIGLLNKIRAYELQDKGANTVEANEQLGFAADMRKYDMIAPMLAHLGISRVKLMTNNPRKVNAMKDVGMDVVERVPLQVGKNRYNEAYLKTKSDKLGHMMSEEHFKAQHQD</sequence>
<reference key="1">
    <citation type="submission" date="2006-12" db="EMBL/GenBank/DDBJ databases">
        <title>Complete sequence of Shewanella amazonensis SB2B.</title>
        <authorList>
            <consortium name="US DOE Joint Genome Institute"/>
            <person name="Copeland A."/>
            <person name="Lucas S."/>
            <person name="Lapidus A."/>
            <person name="Barry K."/>
            <person name="Detter J.C."/>
            <person name="Glavina del Rio T."/>
            <person name="Hammon N."/>
            <person name="Israni S."/>
            <person name="Dalin E."/>
            <person name="Tice H."/>
            <person name="Pitluck S."/>
            <person name="Munk A.C."/>
            <person name="Brettin T."/>
            <person name="Bruce D."/>
            <person name="Han C."/>
            <person name="Tapia R."/>
            <person name="Gilna P."/>
            <person name="Schmutz J."/>
            <person name="Larimer F."/>
            <person name="Land M."/>
            <person name="Hauser L."/>
            <person name="Kyrpides N."/>
            <person name="Mikhailova N."/>
            <person name="Fredrickson J."/>
            <person name="Richardson P."/>
        </authorList>
    </citation>
    <scope>NUCLEOTIDE SEQUENCE [LARGE SCALE GENOMIC DNA]</scope>
    <source>
        <strain>ATCC BAA-1098 / SB2B</strain>
    </source>
</reference>
<keyword id="KW-0342">GTP-binding</keyword>
<keyword id="KW-0378">Hydrolase</keyword>
<keyword id="KW-0479">Metal-binding</keyword>
<keyword id="KW-0547">Nucleotide-binding</keyword>
<keyword id="KW-1185">Reference proteome</keyword>
<keyword id="KW-0686">Riboflavin biosynthesis</keyword>
<keyword id="KW-0862">Zinc</keyword>
<dbReference type="EC" id="3.5.4.25" evidence="1"/>
<dbReference type="EMBL" id="CP000507">
    <property type="protein sequence ID" value="ABL99484.1"/>
    <property type="molecule type" value="Genomic_DNA"/>
</dbReference>
<dbReference type="RefSeq" id="WP_011759393.1">
    <property type="nucleotide sequence ID" value="NC_008700.1"/>
</dbReference>
<dbReference type="SMR" id="A1S528"/>
<dbReference type="STRING" id="326297.Sama_1277"/>
<dbReference type="KEGG" id="saz:Sama_1277"/>
<dbReference type="eggNOG" id="COG0807">
    <property type="taxonomic scope" value="Bacteria"/>
</dbReference>
<dbReference type="HOGENOM" id="CLU_020273_2_1_6"/>
<dbReference type="OrthoDB" id="9793111at2"/>
<dbReference type="UniPathway" id="UPA00275">
    <property type="reaction ID" value="UER00400"/>
</dbReference>
<dbReference type="Proteomes" id="UP000009175">
    <property type="component" value="Chromosome"/>
</dbReference>
<dbReference type="GO" id="GO:0005829">
    <property type="term" value="C:cytosol"/>
    <property type="evidence" value="ECO:0007669"/>
    <property type="project" value="TreeGrafter"/>
</dbReference>
<dbReference type="GO" id="GO:0005525">
    <property type="term" value="F:GTP binding"/>
    <property type="evidence" value="ECO:0007669"/>
    <property type="project" value="UniProtKB-KW"/>
</dbReference>
<dbReference type="GO" id="GO:0003935">
    <property type="term" value="F:GTP cyclohydrolase II activity"/>
    <property type="evidence" value="ECO:0007669"/>
    <property type="project" value="UniProtKB-UniRule"/>
</dbReference>
<dbReference type="GO" id="GO:0008270">
    <property type="term" value="F:zinc ion binding"/>
    <property type="evidence" value="ECO:0007669"/>
    <property type="project" value="UniProtKB-UniRule"/>
</dbReference>
<dbReference type="GO" id="GO:0009231">
    <property type="term" value="P:riboflavin biosynthetic process"/>
    <property type="evidence" value="ECO:0007669"/>
    <property type="project" value="UniProtKB-UniRule"/>
</dbReference>
<dbReference type="CDD" id="cd00641">
    <property type="entry name" value="GTP_cyclohydro2"/>
    <property type="match status" value="1"/>
</dbReference>
<dbReference type="FunFam" id="3.40.50.10990:FF:000002">
    <property type="entry name" value="GTP cyclohydrolase-2"/>
    <property type="match status" value="1"/>
</dbReference>
<dbReference type="Gene3D" id="3.40.50.10990">
    <property type="entry name" value="GTP cyclohydrolase II"/>
    <property type="match status" value="1"/>
</dbReference>
<dbReference type="HAMAP" id="MF_00179">
    <property type="entry name" value="RibA"/>
    <property type="match status" value="1"/>
</dbReference>
<dbReference type="InterPro" id="IPR032677">
    <property type="entry name" value="GTP_cyclohydro_II"/>
</dbReference>
<dbReference type="InterPro" id="IPR000926">
    <property type="entry name" value="RibA"/>
</dbReference>
<dbReference type="InterPro" id="IPR036144">
    <property type="entry name" value="RibA-like_sf"/>
</dbReference>
<dbReference type="NCBIfam" id="NF001591">
    <property type="entry name" value="PRK00393.1"/>
    <property type="match status" value="1"/>
</dbReference>
<dbReference type="NCBIfam" id="TIGR00505">
    <property type="entry name" value="ribA"/>
    <property type="match status" value="1"/>
</dbReference>
<dbReference type="PANTHER" id="PTHR21327:SF18">
    <property type="entry name" value="3,4-DIHYDROXY-2-BUTANONE 4-PHOSPHATE SYNTHASE"/>
    <property type="match status" value="1"/>
</dbReference>
<dbReference type="PANTHER" id="PTHR21327">
    <property type="entry name" value="GTP CYCLOHYDROLASE II-RELATED"/>
    <property type="match status" value="1"/>
</dbReference>
<dbReference type="Pfam" id="PF00925">
    <property type="entry name" value="GTP_cyclohydro2"/>
    <property type="match status" value="1"/>
</dbReference>
<dbReference type="SUPFAM" id="SSF142695">
    <property type="entry name" value="RibA-like"/>
    <property type="match status" value="1"/>
</dbReference>
<gene>
    <name evidence="1" type="primary">ribA</name>
    <name type="ordered locus">Sama_1277</name>
</gene>
<accession>A1S528</accession>
<name>RIBA_SHEAM</name>
<comment type="function">
    <text evidence="1">Catalyzes the conversion of GTP to 2,5-diamino-6-ribosylamino-4(3H)-pyrimidinone 5'-phosphate (DARP), formate and pyrophosphate.</text>
</comment>
<comment type="catalytic activity">
    <reaction evidence="1">
        <text>GTP + 4 H2O = 2,5-diamino-6-hydroxy-4-(5-phosphoribosylamino)-pyrimidine + formate + 2 phosphate + 3 H(+)</text>
        <dbReference type="Rhea" id="RHEA:23704"/>
        <dbReference type="ChEBI" id="CHEBI:15377"/>
        <dbReference type="ChEBI" id="CHEBI:15378"/>
        <dbReference type="ChEBI" id="CHEBI:15740"/>
        <dbReference type="ChEBI" id="CHEBI:37565"/>
        <dbReference type="ChEBI" id="CHEBI:43474"/>
        <dbReference type="ChEBI" id="CHEBI:58614"/>
        <dbReference type="EC" id="3.5.4.25"/>
    </reaction>
</comment>
<comment type="cofactor">
    <cofactor evidence="1">
        <name>Zn(2+)</name>
        <dbReference type="ChEBI" id="CHEBI:29105"/>
    </cofactor>
    <text evidence="1">Binds 1 zinc ion per subunit.</text>
</comment>
<comment type="pathway">
    <text evidence="1">Cofactor biosynthesis; riboflavin biosynthesis; 5-amino-6-(D-ribitylamino)uracil from GTP: step 1/4.</text>
</comment>
<comment type="similarity">
    <text evidence="1">Belongs to the GTP cyclohydrolase II family.</text>
</comment>
<feature type="chain" id="PRO_1000040578" description="GTP cyclohydrolase-2">
    <location>
        <begin position="1"/>
        <end position="205"/>
    </location>
</feature>
<feature type="active site" description="Proton acceptor" evidence="1">
    <location>
        <position position="126"/>
    </location>
</feature>
<feature type="active site" description="Nucleophile" evidence="1">
    <location>
        <position position="128"/>
    </location>
</feature>
<feature type="binding site" evidence="1">
    <location>
        <begin position="49"/>
        <end position="53"/>
    </location>
    <ligand>
        <name>GTP</name>
        <dbReference type="ChEBI" id="CHEBI:37565"/>
    </ligand>
</feature>
<feature type="binding site" evidence="1">
    <location>
        <position position="54"/>
    </location>
    <ligand>
        <name>Zn(2+)</name>
        <dbReference type="ChEBI" id="CHEBI:29105"/>
        <note>catalytic</note>
    </ligand>
</feature>
<feature type="binding site" evidence="1">
    <location>
        <position position="65"/>
    </location>
    <ligand>
        <name>Zn(2+)</name>
        <dbReference type="ChEBI" id="CHEBI:29105"/>
        <note>catalytic</note>
    </ligand>
</feature>
<feature type="binding site" evidence="1">
    <location>
        <position position="67"/>
    </location>
    <ligand>
        <name>Zn(2+)</name>
        <dbReference type="ChEBI" id="CHEBI:29105"/>
        <note>catalytic</note>
    </ligand>
</feature>
<feature type="binding site" evidence="1">
    <location>
        <position position="70"/>
    </location>
    <ligand>
        <name>GTP</name>
        <dbReference type="ChEBI" id="CHEBI:37565"/>
    </ligand>
</feature>
<feature type="binding site" evidence="1">
    <location>
        <begin position="92"/>
        <end position="94"/>
    </location>
    <ligand>
        <name>GTP</name>
        <dbReference type="ChEBI" id="CHEBI:37565"/>
    </ligand>
</feature>
<feature type="binding site" evidence="1">
    <location>
        <position position="114"/>
    </location>
    <ligand>
        <name>GTP</name>
        <dbReference type="ChEBI" id="CHEBI:37565"/>
    </ligand>
</feature>
<feature type="binding site" evidence="1">
    <location>
        <position position="149"/>
    </location>
    <ligand>
        <name>GTP</name>
        <dbReference type="ChEBI" id="CHEBI:37565"/>
    </ligand>
</feature>
<feature type="binding site" evidence="1">
    <location>
        <position position="154"/>
    </location>
    <ligand>
        <name>GTP</name>
        <dbReference type="ChEBI" id="CHEBI:37565"/>
    </ligand>
</feature>
<protein>
    <recommendedName>
        <fullName evidence="1">GTP cyclohydrolase-2</fullName>
        <ecNumber evidence="1">3.5.4.25</ecNumber>
    </recommendedName>
    <alternativeName>
        <fullName evidence="1">GTP cyclohydrolase II</fullName>
    </alternativeName>
</protein>